<dbReference type="EMBL" id="AAFI02000018">
    <property type="protein sequence ID" value="EAL69094.1"/>
    <property type="molecule type" value="Genomic_DNA"/>
</dbReference>
<dbReference type="RefSeq" id="XP_643023.1">
    <property type="nucleotide sequence ID" value="XM_637931.1"/>
</dbReference>
<dbReference type="SMR" id="Q551B5"/>
<dbReference type="FunCoup" id="Q551B5">
    <property type="interactions" value="435"/>
</dbReference>
<dbReference type="STRING" id="44689.Q551B5"/>
<dbReference type="GlyGen" id="Q551B5">
    <property type="glycosylation" value="2 sites"/>
</dbReference>
<dbReference type="PaxDb" id="44689-DDB0202944"/>
<dbReference type="EnsemblProtists" id="EAL69094">
    <property type="protein sequence ID" value="EAL69094"/>
    <property type="gene ID" value="DDB_G0276673"/>
</dbReference>
<dbReference type="GeneID" id="8620627"/>
<dbReference type="KEGG" id="ddi:DDB_G0276673"/>
<dbReference type="dictyBase" id="DDB_G0276673"/>
<dbReference type="VEuPathDB" id="AmoebaDB:DDB_G0276673"/>
<dbReference type="eggNOG" id="KOG1008">
    <property type="taxonomic scope" value="Eukaryota"/>
</dbReference>
<dbReference type="HOGENOM" id="CLU_005843_0_0_1"/>
<dbReference type="InParanoid" id="Q551B5"/>
<dbReference type="OMA" id="YWIASYL"/>
<dbReference type="PhylomeDB" id="Q551B5"/>
<dbReference type="Reactome" id="R-DDI-9639288">
    <property type="pathway name" value="Amino acids regulate mTORC1"/>
</dbReference>
<dbReference type="PRO" id="PR:Q551B5"/>
<dbReference type="Proteomes" id="UP000002195">
    <property type="component" value="Chromosome 2"/>
</dbReference>
<dbReference type="GO" id="GO:0005737">
    <property type="term" value="C:cytoplasm"/>
    <property type="evidence" value="ECO:0000318"/>
    <property type="project" value="GO_Central"/>
</dbReference>
<dbReference type="GO" id="GO:0005765">
    <property type="term" value="C:lysosomal membrane"/>
    <property type="evidence" value="ECO:0007669"/>
    <property type="project" value="UniProtKB-SubCell"/>
</dbReference>
<dbReference type="GO" id="GO:0008270">
    <property type="term" value="F:zinc ion binding"/>
    <property type="evidence" value="ECO:0007669"/>
    <property type="project" value="UniProtKB-KW"/>
</dbReference>
<dbReference type="CDD" id="cd16691">
    <property type="entry name" value="mRING-H2-C3H3C2_Mio"/>
    <property type="match status" value="1"/>
</dbReference>
<dbReference type="Gene3D" id="2.130.10.10">
    <property type="entry name" value="YVTN repeat-like/Quinoprotein amine dehydrogenase"/>
    <property type="match status" value="2"/>
</dbReference>
<dbReference type="InterPro" id="IPR037593">
    <property type="entry name" value="MIOS/Sea4"/>
</dbReference>
<dbReference type="InterPro" id="IPR049092">
    <property type="entry name" value="MIOS_a-sol"/>
</dbReference>
<dbReference type="InterPro" id="IPR015943">
    <property type="entry name" value="WD40/YVTN_repeat-like_dom_sf"/>
</dbReference>
<dbReference type="InterPro" id="IPR019775">
    <property type="entry name" value="WD40_repeat_CS"/>
</dbReference>
<dbReference type="InterPro" id="IPR036322">
    <property type="entry name" value="WD40_repeat_dom_sf"/>
</dbReference>
<dbReference type="InterPro" id="IPR001680">
    <property type="entry name" value="WD40_rpt"/>
</dbReference>
<dbReference type="InterPro" id="IPR031488">
    <property type="entry name" value="Zn_ribbon_mio"/>
</dbReference>
<dbReference type="PANTHER" id="PTHR16453:SF9">
    <property type="entry name" value="GATOR COMPLEX PROTEIN MIOS"/>
    <property type="match status" value="1"/>
</dbReference>
<dbReference type="PANTHER" id="PTHR16453">
    <property type="entry name" value="WD40 DOMAIN-CONTAINING PROTEIN MIO FAMILY MEMBER"/>
    <property type="match status" value="1"/>
</dbReference>
<dbReference type="Pfam" id="PF21719">
    <property type="entry name" value="MIOS_a-sol"/>
    <property type="match status" value="1"/>
</dbReference>
<dbReference type="Pfam" id="PF21720">
    <property type="entry name" value="MIOS_WD40"/>
    <property type="match status" value="2"/>
</dbReference>
<dbReference type="Pfam" id="PF17034">
    <property type="entry name" value="zinc_ribbon_16"/>
    <property type="match status" value="1"/>
</dbReference>
<dbReference type="SMART" id="SM00320">
    <property type="entry name" value="WD40"/>
    <property type="match status" value="6"/>
</dbReference>
<dbReference type="SUPFAM" id="SSF50978">
    <property type="entry name" value="WD40 repeat-like"/>
    <property type="match status" value="1"/>
</dbReference>
<dbReference type="PROSITE" id="PS00678">
    <property type="entry name" value="WD_REPEATS_1"/>
    <property type="match status" value="1"/>
</dbReference>
<dbReference type="PROSITE" id="PS50082">
    <property type="entry name" value="WD_REPEATS_2"/>
    <property type="match status" value="1"/>
</dbReference>
<dbReference type="PROSITE" id="PS50294">
    <property type="entry name" value="WD_REPEATS_REGION"/>
    <property type="match status" value="1"/>
</dbReference>
<proteinExistence type="inferred from homology"/>
<keyword id="KW-0458">Lysosome</keyword>
<keyword id="KW-0472">Membrane</keyword>
<keyword id="KW-0479">Metal-binding</keyword>
<keyword id="KW-1185">Reference proteome</keyword>
<keyword id="KW-0677">Repeat</keyword>
<keyword id="KW-0853">WD repeat</keyword>
<keyword id="KW-0862">Zinc</keyword>
<keyword id="KW-0863">Zinc-finger</keyword>
<organism>
    <name type="scientific">Dictyostelium discoideum</name>
    <name type="common">Social amoeba</name>
    <dbReference type="NCBI Taxonomy" id="44689"/>
    <lineage>
        <taxon>Eukaryota</taxon>
        <taxon>Amoebozoa</taxon>
        <taxon>Evosea</taxon>
        <taxon>Eumycetozoa</taxon>
        <taxon>Dictyostelia</taxon>
        <taxon>Dictyosteliales</taxon>
        <taxon>Dictyosteliaceae</taxon>
        <taxon>Dictyostelium</taxon>
    </lineage>
</organism>
<reference key="1">
    <citation type="journal article" date="2002" name="Nature">
        <title>Sequence and analysis of chromosome 2 of Dictyostelium discoideum.</title>
        <authorList>
            <person name="Gloeckner G."/>
            <person name="Eichinger L."/>
            <person name="Szafranski K."/>
            <person name="Pachebat J.A."/>
            <person name="Bankier A.T."/>
            <person name="Dear P.H."/>
            <person name="Lehmann R."/>
            <person name="Baumgart C."/>
            <person name="Parra G."/>
            <person name="Abril J.F."/>
            <person name="Guigo R."/>
            <person name="Kumpf K."/>
            <person name="Tunggal B."/>
            <person name="Cox E.C."/>
            <person name="Quail M.A."/>
            <person name="Platzer M."/>
            <person name="Rosenthal A."/>
            <person name="Noegel A.A."/>
        </authorList>
    </citation>
    <scope>NUCLEOTIDE SEQUENCE [LARGE SCALE GENOMIC DNA]</scope>
    <source>
        <strain>AX4</strain>
    </source>
</reference>
<reference key="2">
    <citation type="journal article" date="2005" name="Nature">
        <title>The genome of the social amoeba Dictyostelium discoideum.</title>
        <authorList>
            <person name="Eichinger L."/>
            <person name="Pachebat J.A."/>
            <person name="Gloeckner G."/>
            <person name="Rajandream M.A."/>
            <person name="Sucgang R."/>
            <person name="Berriman M."/>
            <person name="Song J."/>
            <person name="Olsen R."/>
            <person name="Szafranski K."/>
            <person name="Xu Q."/>
            <person name="Tunggal B."/>
            <person name="Kummerfeld S."/>
            <person name="Madera M."/>
            <person name="Konfortov B.A."/>
            <person name="Rivero F."/>
            <person name="Bankier A.T."/>
            <person name="Lehmann R."/>
            <person name="Hamlin N."/>
            <person name="Davies R."/>
            <person name="Gaudet P."/>
            <person name="Fey P."/>
            <person name="Pilcher K."/>
            <person name="Chen G."/>
            <person name="Saunders D."/>
            <person name="Sodergren E.J."/>
            <person name="Davis P."/>
            <person name="Kerhornou A."/>
            <person name="Nie X."/>
            <person name="Hall N."/>
            <person name="Anjard C."/>
            <person name="Hemphill L."/>
            <person name="Bason N."/>
            <person name="Farbrother P."/>
            <person name="Desany B."/>
            <person name="Just E."/>
            <person name="Morio T."/>
            <person name="Rost R."/>
            <person name="Churcher C.M."/>
            <person name="Cooper J."/>
            <person name="Haydock S."/>
            <person name="van Driessche N."/>
            <person name="Cronin A."/>
            <person name="Goodhead I."/>
            <person name="Muzny D.M."/>
            <person name="Mourier T."/>
            <person name="Pain A."/>
            <person name="Lu M."/>
            <person name="Harper D."/>
            <person name="Lindsay R."/>
            <person name="Hauser H."/>
            <person name="James K.D."/>
            <person name="Quiles M."/>
            <person name="Madan Babu M."/>
            <person name="Saito T."/>
            <person name="Buchrieser C."/>
            <person name="Wardroper A."/>
            <person name="Felder M."/>
            <person name="Thangavelu M."/>
            <person name="Johnson D."/>
            <person name="Knights A."/>
            <person name="Loulseged H."/>
            <person name="Mungall K.L."/>
            <person name="Oliver K."/>
            <person name="Price C."/>
            <person name="Quail M.A."/>
            <person name="Urushihara H."/>
            <person name="Hernandez J."/>
            <person name="Rabbinowitsch E."/>
            <person name="Steffen D."/>
            <person name="Sanders M."/>
            <person name="Ma J."/>
            <person name="Kohara Y."/>
            <person name="Sharp S."/>
            <person name="Simmonds M.N."/>
            <person name="Spiegler S."/>
            <person name="Tivey A."/>
            <person name="Sugano S."/>
            <person name="White B."/>
            <person name="Walker D."/>
            <person name="Woodward J.R."/>
            <person name="Winckler T."/>
            <person name="Tanaka Y."/>
            <person name="Shaulsky G."/>
            <person name="Schleicher M."/>
            <person name="Weinstock G.M."/>
            <person name="Rosenthal A."/>
            <person name="Cox E.C."/>
            <person name="Chisholm R.L."/>
            <person name="Gibbs R.A."/>
            <person name="Loomis W.F."/>
            <person name="Platzer M."/>
            <person name="Kay R.R."/>
            <person name="Williams J.G."/>
            <person name="Dear P.H."/>
            <person name="Noegel A.A."/>
            <person name="Barrell B.G."/>
            <person name="Kuspa A."/>
        </authorList>
    </citation>
    <scope>NUCLEOTIDE SEQUENCE [LARGE SCALE GENOMIC DNA]</scope>
    <source>
        <strain>AX4</strain>
    </source>
</reference>
<sequence>MSQSSTRKRLIQWSPHNKSSFIVGSNDLRLYNFKFKDKNEKKNENNINNSNQYNQNNQQQQQQQIQQQQQQQQQQQQQQQQQQQQQQQQQQQQHDIYSPKSITSKYMETYNFDIEYPPDDWVPQEKKTISLMSVNSDVQLMKCMAWCPDESDTNLIACGLTSGRAILTSFSSVNRILKELVPKHTRSCNAISWNPIYTNQLAVGLDKVRGDSSTLIWDINYLQSTTLNNHLHKNNNNYISKLQQQQNNIDQPYIISQISDNSFSTSTDYTDTIYQPISEFTQSEATLALAWLPNNPSCLLVGTGSKWLKLYDIRDVNSSQSVMAHQKSVNGVCVDPFDFNRIATMSEDSHIKVWDLRNLDDPLIIVNSNCKSIQQIDWCPTRSGVLASVGKDKSSIKLWDIKAPIEFSKSPKLESTTLSTGGGGSGSNTSNNLNKRSTSNNNNSQDPINTISKPTKIHHSSDVVSSFSWHPTNECRMLTVSYSGVIDVVSLNENIPISWSPHGGICFSFGNNVLEGPTKGETLEPNILNYKNLINDGRYEKDISSKIKERAIFGYSANVEENINLANKINDENINFLWKWIQKVPIQIQNFKRESSLISTPSISTTTPGGPITPSATTKTIINNNNNNNNNKNINNNINNINNNNNNNNNNNNNNNNNNNNNNNNNNNNNEYNGIYNILIEKDISTVESSNGFVIYKSPNRNLCLSICGWGFNQSLPLENILSRLEKSGEYERAAAIAVFHLDIKRAILVVTNATYNIHPVTQTNHHGHLMRQDREFSLKLLSIALAGFDGSSTSNNNNNNNNNNNNIWKETCKSTAKSFINPYLKTCLEFLASNSDSKDIYSIIEDSRINLDDKIAFSCKYLDYQDLIHFVERNTIRVIECGNLKGVLLTGLTGRGVDLLSNYIDRTCDIQTAVLAISLVVPKFFRDKRVSKWSSIYSDLLDQWELWHERAILDIQTRISGIDQPPTPQIFAKCGFCQNSFAFESISASSIVGRNASSKPNFKAKVPFCPHCKQSLPRCCLCLLPLNCMVPTPEFKKSNTTIGSGGGSIASSGGINNSGSINNPNDSQLWSNGSEPFEDWFTWCQTCRHGGHSQHILDWFKDHSICPVTSCDCRCSQL</sequence>
<name>MIO_DICDI</name>
<protein>
    <recommendedName>
        <fullName evidence="3">GATOR2 complex protein MIOS</fullName>
    </recommendedName>
</protein>
<gene>
    <name evidence="3" type="primary">mios</name>
    <name type="ORF">DDB_G0276673</name>
</gene>
<comment type="function">
    <text evidence="1">As a component of the GATOR complex may function in the amino acid-sensing branch of the TORC1 signaling pathway.</text>
</comment>
<comment type="subunit">
    <text evidence="1">Probably part of the GATOR complex.</text>
</comment>
<comment type="subcellular location">
    <subcellularLocation>
        <location evidence="1">Lysosome membrane</location>
    </subcellularLocation>
</comment>
<comment type="similarity">
    <text evidence="3">Belongs to the WD repeat mio family.</text>
</comment>
<evidence type="ECO:0000250" key="1">
    <source>
        <dbReference type="UniProtKB" id="Q9NXC5"/>
    </source>
</evidence>
<evidence type="ECO:0000256" key="2">
    <source>
        <dbReference type="SAM" id="MobiDB-lite"/>
    </source>
</evidence>
<evidence type="ECO:0000305" key="3"/>
<accession>Q551B5</accession>
<feature type="chain" id="PRO_0000329411" description="GATOR2 complex protein MIOS">
    <location>
        <begin position="1"/>
        <end position="1119"/>
    </location>
</feature>
<feature type="repeat" description="WD 1">
    <location>
        <begin position="3"/>
        <end position="43"/>
    </location>
</feature>
<feature type="repeat" description="WD 2">
    <location>
        <begin position="127"/>
        <end position="169"/>
    </location>
</feature>
<feature type="repeat" description="WD 3">
    <location>
        <begin position="183"/>
        <end position="227"/>
    </location>
</feature>
<feature type="repeat" description="WD 4">
    <location>
        <begin position="281"/>
        <end position="321"/>
    </location>
</feature>
<feature type="repeat" description="WD 5">
    <location>
        <begin position="324"/>
        <end position="364"/>
    </location>
</feature>
<feature type="repeat" description="WD 6">
    <location>
        <begin position="368"/>
        <end position="409"/>
    </location>
</feature>
<feature type="repeat" description="WD 7">
    <location>
        <begin position="459"/>
        <end position="499"/>
    </location>
</feature>
<feature type="zinc finger region" description="C4-type" evidence="1">
    <location>
        <begin position="973"/>
        <end position="1016"/>
    </location>
</feature>
<feature type="region of interest" description="Disordered" evidence="2">
    <location>
        <begin position="41"/>
        <end position="60"/>
    </location>
</feature>
<feature type="region of interest" description="Disordered" evidence="2">
    <location>
        <begin position="413"/>
        <end position="455"/>
    </location>
</feature>
<feature type="region of interest" description="Disordered" evidence="2">
    <location>
        <begin position="601"/>
        <end position="669"/>
    </location>
</feature>
<feature type="compositionally biased region" description="Low complexity" evidence="2">
    <location>
        <begin position="45"/>
        <end position="60"/>
    </location>
</feature>
<feature type="compositionally biased region" description="Low complexity" evidence="2">
    <location>
        <begin position="427"/>
        <end position="444"/>
    </location>
</feature>
<feature type="binding site" evidence="1">
    <location>
        <position position="975"/>
    </location>
    <ligand>
        <name>Zn(2+)</name>
        <dbReference type="ChEBI" id="CHEBI:29105"/>
        <label>1</label>
    </ligand>
</feature>
<feature type="binding site" evidence="1">
    <location>
        <position position="978"/>
    </location>
    <ligand>
        <name>Zn(2+)</name>
        <dbReference type="ChEBI" id="CHEBI:29105"/>
        <label>1</label>
    </ligand>
</feature>
<feature type="binding site" evidence="1">
    <location>
        <position position="1010"/>
    </location>
    <ligand>
        <name>Zn(2+)</name>
        <dbReference type="ChEBI" id="CHEBI:29105"/>
        <label>1</label>
    </ligand>
</feature>
<feature type="binding site" evidence="1">
    <location>
        <position position="1013"/>
    </location>
    <ligand>
        <name>Zn(2+)</name>
        <dbReference type="ChEBI" id="CHEBI:29105"/>
        <label>1</label>
    </ligand>
</feature>
<feature type="binding site" evidence="1">
    <location>
        <position position="1023"/>
    </location>
    <ligand>
        <name>Zn(2+)</name>
        <dbReference type="ChEBI" id="CHEBI:29105"/>
        <label>2</label>
    </ligand>
</feature>
<feature type="binding site" evidence="1">
    <location>
        <position position="1085"/>
    </location>
    <ligand>
        <name>Zn(2+)</name>
        <dbReference type="ChEBI" id="CHEBI:29105"/>
        <label>3</label>
    </ligand>
</feature>
<feature type="binding site" evidence="1">
    <location>
        <position position="1088"/>
    </location>
    <ligand>
        <name>Zn(2+)</name>
        <dbReference type="ChEBI" id="CHEBI:29105"/>
        <label>3</label>
    </ligand>
</feature>
<feature type="binding site" evidence="1">
    <location>
        <position position="1088"/>
    </location>
    <ligand>
        <name>Zn(2+)</name>
        <dbReference type="ChEBI" id="CHEBI:29105"/>
        <label>4</label>
    </ligand>
</feature>
<feature type="binding site" evidence="1">
    <location>
        <position position="1090"/>
    </location>
    <ligand>
        <name>Zn(2+)</name>
        <dbReference type="ChEBI" id="CHEBI:29105"/>
        <label>4</label>
    </ligand>
</feature>
<feature type="binding site" evidence="1">
    <location>
        <position position="1093"/>
    </location>
    <ligand>
        <name>Zn(2+)</name>
        <dbReference type="ChEBI" id="CHEBI:29105"/>
        <label>2</label>
    </ligand>
</feature>
<feature type="binding site" evidence="1">
    <location>
        <position position="1096"/>
    </location>
    <ligand>
        <name>Zn(2+)</name>
        <dbReference type="ChEBI" id="CHEBI:29105"/>
        <label>2</label>
    </ligand>
</feature>
<feature type="binding site" evidence="1">
    <location>
        <position position="1107"/>
    </location>
    <ligand>
        <name>Zn(2+)</name>
        <dbReference type="ChEBI" id="CHEBI:29105"/>
        <label>4</label>
    </ligand>
</feature>
<feature type="binding site" evidence="1">
    <location>
        <position position="1112"/>
    </location>
    <ligand>
        <name>Zn(2+)</name>
        <dbReference type="ChEBI" id="CHEBI:29105"/>
        <label>4</label>
    </ligand>
</feature>
<feature type="binding site" evidence="1">
    <location>
        <position position="1116"/>
    </location>
    <ligand>
        <name>Zn(2+)</name>
        <dbReference type="ChEBI" id="CHEBI:29105"/>
        <label>3</label>
    </ligand>
</feature>